<feature type="chain" id="PRO_0000168903" description="Uncharacterized protein YdaF">
    <location>
        <begin position="1"/>
        <end position="51"/>
    </location>
</feature>
<feature type="sequence conflict" description="In Ref. 1." evidence="1" ref="1">
    <original>TETGAR</original>
    <variation>PKAGAP</variation>
    <location>
        <begin position="37"/>
        <end position="42"/>
    </location>
</feature>
<reference key="1">
    <citation type="unpublished observations" date="1994-08">
        <authorList>
            <person name="Clark A.J."/>
            <person name="Samra H."/>
        </authorList>
    </citation>
    <scope>NUCLEOTIDE SEQUENCE [GENOMIC DNA]</scope>
    <source>
        <strain>K12</strain>
    </source>
</reference>
<reference key="2">
    <citation type="journal article" date="1996" name="DNA Res.">
        <title>A 570-kb DNA sequence of the Escherichia coli K-12 genome corresponding to the 28.0-40.1 min region on the linkage map.</title>
        <authorList>
            <person name="Aiba H."/>
            <person name="Baba T."/>
            <person name="Fujita K."/>
            <person name="Hayashi K."/>
            <person name="Inada T."/>
            <person name="Isono K."/>
            <person name="Itoh T."/>
            <person name="Kasai H."/>
            <person name="Kashimoto K."/>
            <person name="Kimura S."/>
            <person name="Kitakawa M."/>
            <person name="Kitagawa M."/>
            <person name="Makino K."/>
            <person name="Miki T."/>
            <person name="Mizobuchi K."/>
            <person name="Mori H."/>
            <person name="Mori T."/>
            <person name="Motomura K."/>
            <person name="Nakade S."/>
            <person name="Nakamura Y."/>
            <person name="Nashimoto H."/>
            <person name="Nishio Y."/>
            <person name="Oshima T."/>
            <person name="Saito N."/>
            <person name="Sampei G."/>
            <person name="Seki Y."/>
            <person name="Sivasundaram S."/>
            <person name="Tagami H."/>
            <person name="Takeda J."/>
            <person name="Takemoto K."/>
            <person name="Takeuchi Y."/>
            <person name="Wada C."/>
            <person name="Yamamoto Y."/>
            <person name="Horiuchi T."/>
        </authorList>
    </citation>
    <scope>NUCLEOTIDE SEQUENCE [LARGE SCALE GENOMIC DNA]</scope>
    <source>
        <strain>K12 / W3110 / ATCC 27325 / DSM 5911</strain>
    </source>
</reference>
<reference key="3">
    <citation type="journal article" date="1997" name="Science">
        <title>The complete genome sequence of Escherichia coli K-12.</title>
        <authorList>
            <person name="Blattner F.R."/>
            <person name="Plunkett G. III"/>
            <person name="Bloch C.A."/>
            <person name="Perna N.T."/>
            <person name="Burland V."/>
            <person name="Riley M."/>
            <person name="Collado-Vides J."/>
            <person name="Glasner J.D."/>
            <person name="Rode C.K."/>
            <person name="Mayhew G.F."/>
            <person name="Gregor J."/>
            <person name="Davis N.W."/>
            <person name="Kirkpatrick H.A."/>
            <person name="Goeden M.A."/>
            <person name="Rose D.J."/>
            <person name="Mau B."/>
            <person name="Shao Y."/>
        </authorList>
    </citation>
    <scope>NUCLEOTIDE SEQUENCE [LARGE SCALE GENOMIC DNA]</scope>
    <source>
        <strain>K12 / MG1655 / ATCC 47076</strain>
    </source>
</reference>
<reference key="4">
    <citation type="journal article" date="2006" name="Mol. Syst. Biol.">
        <title>Highly accurate genome sequences of Escherichia coli K-12 strains MG1655 and W3110.</title>
        <authorList>
            <person name="Hayashi K."/>
            <person name="Morooka N."/>
            <person name="Yamamoto Y."/>
            <person name="Fujita K."/>
            <person name="Isono K."/>
            <person name="Choi S."/>
            <person name="Ohtsubo E."/>
            <person name="Baba T."/>
            <person name="Wanner B.L."/>
            <person name="Mori H."/>
            <person name="Horiuchi T."/>
        </authorList>
    </citation>
    <scope>NUCLEOTIDE SEQUENCE [LARGE SCALE GENOMIC DNA]</scope>
    <source>
        <strain>K12 / W3110 / ATCC 27325 / DSM 5911</strain>
    </source>
</reference>
<proteinExistence type="predicted"/>
<name>YDAF_ECOLI</name>
<accession>P0ACW0</accession>
<accession>P38395</accession>
<accession>P76851</accession>
<accession>Q8X2M9</accession>
<accession>V9HVW8</accession>
<gene>
    <name type="primary">ydaF</name>
    <name type="ordered locus">b4527</name>
    <name type="ordered locus">JW1349</name>
    <name type="ORF">b1353.1</name>
</gene>
<comment type="similarity">
    <text evidence="1">To E.coli YdfA.</text>
</comment>
<sequence length="51" mass="5769">MQKIDLGNNESLVCGVFPNQDGTFTAMTYTKSKTFKTETGARRWLEKHTVS</sequence>
<evidence type="ECO:0000305" key="1"/>
<protein>
    <recommendedName>
        <fullName>Uncharacterized protein YdaF</fullName>
    </recommendedName>
</protein>
<keyword id="KW-1185">Reference proteome</keyword>
<dbReference type="EMBL" id="U00096">
    <property type="protein sequence ID" value="AAC74436.2"/>
    <property type="molecule type" value="Genomic_DNA"/>
</dbReference>
<dbReference type="EMBL" id="AP009048">
    <property type="protein sequence ID" value="BAA14957.1"/>
    <property type="molecule type" value="Genomic_DNA"/>
</dbReference>
<dbReference type="PIR" id="T09180">
    <property type="entry name" value="T09180"/>
</dbReference>
<dbReference type="RefSeq" id="NP_415872.2">
    <property type="nucleotide sequence ID" value="NC_000913.3"/>
</dbReference>
<dbReference type="RefSeq" id="WP_001169151.1">
    <property type="nucleotide sequence ID" value="NZ_SSUV01000042.1"/>
</dbReference>
<dbReference type="BioGRID" id="4260166">
    <property type="interactions" value="14"/>
</dbReference>
<dbReference type="FunCoup" id="P0ACW0">
    <property type="interactions" value="1"/>
</dbReference>
<dbReference type="STRING" id="511145.b4527"/>
<dbReference type="PaxDb" id="511145-b4527"/>
<dbReference type="EnsemblBacteria" id="AAC74436">
    <property type="protein sequence ID" value="AAC74436"/>
    <property type="gene ID" value="b4527"/>
</dbReference>
<dbReference type="GeneID" id="945911"/>
<dbReference type="KEGG" id="ecj:JW1349"/>
<dbReference type="KEGG" id="eco:b4527"/>
<dbReference type="KEGG" id="ecoc:C3026_07930"/>
<dbReference type="PATRIC" id="fig|511145.12.peg.1414"/>
<dbReference type="EchoBASE" id="EB2077"/>
<dbReference type="HOGENOM" id="CLU_191375_1_0_6"/>
<dbReference type="InParanoid" id="P0ACW0"/>
<dbReference type="OMA" id="NESIVCG"/>
<dbReference type="OrthoDB" id="8454411at2"/>
<dbReference type="BioCyc" id="EcoCyc:MONOMER0-2670"/>
<dbReference type="PRO" id="PR:P0ACW0"/>
<dbReference type="Proteomes" id="UP000000625">
    <property type="component" value="Chromosome"/>
</dbReference>
<dbReference type="InterPro" id="IPR009821">
    <property type="entry name" value="DUF1391"/>
</dbReference>
<dbReference type="Pfam" id="PF07151">
    <property type="entry name" value="DUF1391"/>
    <property type="match status" value="1"/>
</dbReference>
<organism>
    <name type="scientific">Escherichia coli (strain K12)</name>
    <dbReference type="NCBI Taxonomy" id="83333"/>
    <lineage>
        <taxon>Bacteria</taxon>
        <taxon>Pseudomonadati</taxon>
        <taxon>Pseudomonadota</taxon>
        <taxon>Gammaproteobacteria</taxon>
        <taxon>Enterobacterales</taxon>
        <taxon>Enterobacteriaceae</taxon>
        <taxon>Escherichia</taxon>
    </lineage>
</organism>